<proteinExistence type="inferred from homology"/>
<reference key="1">
    <citation type="journal article" date="2000" name="Nature">
        <title>The genome sequence of the plant pathogen Xylella fastidiosa.</title>
        <authorList>
            <person name="Simpson A.J.G."/>
            <person name="Reinach F.C."/>
            <person name="Arruda P."/>
            <person name="Abreu F.A."/>
            <person name="Acencio M."/>
            <person name="Alvarenga R."/>
            <person name="Alves L.M.C."/>
            <person name="Araya J.E."/>
            <person name="Baia G.S."/>
            <person name="Baptista C.S."/>
            <person name="Barros M.H."/>
            <person name="Bonaccorsi E.D."/>
            <person name="Bordin S."/>
            <person name="Bove J.M."/>
            <person name="Briones M.R.S."/>
            <person name="Bueno M.R.P."/>
            <person name="Camargo A.A."/>
            <person name="Camargo L.E.A."/>
            <person name="Carraro D.M."/>
            <person name="Carrer H."/>
            <person name="Colauto N.B."/>
            <person name="Colombo C."/>
            <person name="Costa F.F."/>
            <person name="Costa M.C.R."/>
            <person name="Costa-Neto C.M."/>
            <person name="Coutinho L.L."/>
            <person name="Cristofani M."/>
            <person name="Dias-Neto E."/>
            <person name="Docena C."/>
            <person name="El-Dorry H."/>
            <person name="Facincani A.P."/>
            <person name="Ferreira A.J.S."/>
            <person name="Ferreira V.C.A."/>
            <person name="Ferro J.A."/>
            <person name="Fraga J.S."/>
            <person name="Franca S.C."/>
            <person name="Franco M.C."/>
            <person name="Frohme M."/>
            <person name="Furlan L.R."/>
            <person name="Garnier M."/>
            <person name="Goldman G.H."/>
            <person name="Goldman M.H.S."/>
            <person name="Gomes S.L."/>
            <person name="Gruber A."/>
            <person name="Ho P.L."/>
            <person name="Hoheisel J.D."/>
            <person name="Junqueira M.L."/>
            <person name="Kemper E.L."/>
            <person name="Kitajima J.P."/>
            <person name="Krieger J.E."/>
            <person name="Kuramae E.E."/>
            <person name="Laigret F."/>
            <person name="Lambais M.R."/>
            <person name="Leite L.C.C."/>
            <person name="Lemos E.G.M."/>
            <person name="Lemos M.V.F."/>
            <person name="Lopes S.A."/>
            <person name="Lopes C.R."/>
            <person name="Machado J.A."/>
            <person name="Machado M.A."/>
            <person name="Madeira A.M.B.N."/>
            <person name="Madeira H.M.F."/>
            <person name="Marino C.L."/>
            <person name="Marques M.V."/>
            <person name="Martins E.A.L."/>
            <person name="Martins E.M.F."/>
            <person name="Matsukuma A.Y."/>
            <person name="Menck C.F.M."/>
            <person name="Miracca E.C."/>
            <person name="Miyaki C.Y."/>
            <person name="Monteiro-Vitorello C.B."/>
            <person name="Moon D.H."/>
            <person name="Nagai M.A."/>
            <person name="Nascimento A.L.T.O."/>
            <person name="Netto L.E.S."/>
            <person name="Nhani A. Jr."/>
            <person name="Nobrega F.G."/>
            <person name="Nunes L.R."/>
            <person name="Oliveira M.A."/>
            <person name="de Oliveira M.C."/>
            <person name="de Oliveira R.C."/>
            <person name="Palmieri D.A."/>
            <person name="Paris A."/>
            <person name="Peixoto B.R."/>
            <person name="Pereira G.A.G."/>
            <person name="Pereira H.A. Jr."/>
            <person name="Pesquero J.B."/>
            <person name="Quaggio R.B."/>
            <person name="Roberto P.G."/>
            <person name="Rodrigues V."/>
            <person name="de Rosa A.J.M."/>
            <person name="de Rosa V.E. Jr."/>
            <person name="de Sa R.G."/>
            <person name="Santelli R.V."/>
            <person name="Sawasaki H.E."/>
            <person name="da Silva A.C.R."/>
            <person name="da Silva A.M."/>
            <person name="da Silva F.R."/>
            <person name="Silva W.A. Jr."/>
            <person name="da Silveira J.F."/>
            <person name="Silvestri M.L.Z."/>
            <person name="Siqueira W.J."/>
            <person name="de Souza A.A."/>
            <person name="de Souza A.P."/>
            <person name="Terenzi M.F."/>
            <person name="Truffi D."/>
            <person name="Tsai S.M."/>
            <person name="Tsuhako M.H."/>
            <person name="Vallada H."/>
            <person name="Van Sluys M.A."/>
            <person name="Verjovski-Almeida S."/>
            <person name="Vettore A.L."/>
            <person name="Zago M.A."/>
            <person name="Zatz M."/>
            <person name="Meidanis J."/>
            <person name="Setubal J.C."/>
        </authorList>
    </citation>
    <scope>NUCLEOTIDE SEQUENCE [LARGE SCALE GENOMIC DNA]</scope>
    <source>
        <strain>9a5c</strain>
    </source>
</reference>
<gene>
    <name evidence="1" type="primary">pdxJ</name>
    <name type="ordered locus">XF_0060</name>
</gene>
<keyword id="KW-0963">Cytoplasm</keyword>
<keyword id="KW-0664">Pyridoxine biosynthesis</keyword>
<keyword id="KW-0808">Transferase</keyword>
<dbReference type="EC" id="2.6.99.2" evidence="1"/>
<dbReference type="EMBL" id="AE003849">
    <property type="protein sequence ID" value="AAF82873.1"/>
    <property type="molecule type" value="Genomic_DNA"/>
</dbReference>
<dbReference type="PIR" id="H82854">
    <property type="entry name" value="H82854"/>
</dbReference>
<dbReference type="RefSeq" id="WP_010892609.1">
    <property type="nucleotide sequence ID" value="NC_002488.3"/>
</dbReference>
<dbReference type="SMR" id="Q9PH84"/>
<dbReference type="STRING" id="160492.XF_0060"/>
<dbReference type="KEGG" id="xfa:XF_0060"/>
<dbReference type="eggNOG" id="COG0854">
    <property type="taxonomic scope" value="Bacteria"/>
</dbReference>
<dbReference type="HOGENOM" id="CLU_074563_1_0_6"/>
<dbReference type="UniPathway" id="UPA00244">
    <property type="reaction ID" value="UER00313"/>
</dbReference>
<dbReference type="Proteomes" id="UP000000812">
    <property type="component" value="Chromosome"/>
</dbReference>
<dbReference type="GO" id="GO:0005829">
    <property type="term" value="C:cytosol"/>
    <property type="evidence" value="ECO:0007669"/>
    <property type="project" value="TreeGrafter"/>
</dbReference>
<dbReference type="GO" id="GO:0033856">
    <property type="term" value="F:pyridoxine 5'-phosphate synthase activity"/>
    <property type="evidence" value="ECO:0007669"/>
    <property type="project" value="UniProtKB-EC"/>
</dbReference>
<dbReference type="GO" id="GO:0008615">
    <property type="term" value="P:pyridoxine biosynthetic process"/>
    <property type="evidence" value="ECO:0007669"/>
    <property type="project" value="UniProtKB-UniRule"/>
</dbReference>
<dbReference type="CDD" id="cd00003">
    <property type="entry name" value="PNPsynthase"/>
    <property type="match status" value="1"/>
</dbReference>
<dbReference type="Gene3D" id="3.20.20.70">
    <property type="entry name" value="Aldolase class I"/>
    <property type="match status" value="1"/>
</dbReference>
<dbReference type="HAMAP" id="MF_00279">
    <property type="entry name" value="PdxJ"/>
    <property type="match status" value="1"/>
</dbReference>
<dbReference type="InterPro" id="IPR013785">
    <property type="entry name" value="Aldolase_TIM"/>
</dbReference>
<dbReference type="InterPro" id="IPR004569">
    <property type="entry name" value="PyrdxlP_synth_PdxJ"/>
</dbReference>
<dbReference type="InterPro" id="IPR036130">
    <property type="entry name" value="Pyridoxine-5'_phos_synth"/>
</dbReference>
<dbReference type="NCBIfam" id="TIGR00559">
    <property type="entry name" value="pdxJ"/>
    <property type="match status" value="1"/>
</dbReference>
<dbReference type="NCBIfam" id="NF003626">
    <property type="entry name" value="PRK05265.1-4"/>
    <property type="match status" value="1"/>
</dbReference>
<dbReference type="PANTHER" id="PTHR30456">
    <property type="entry name" value="PYRIDOXINE 5'-PHOSPHATE SYNTHASE"/>
    <property type="match status" value="1"/>
</dbReference>
<dbReference type="PANTHER" id="PTHR30456:SF0">
    <property type="entry name" value="PYRIDOXINE 5'-PHOSPHATE SYNTHASE"/>
    <property type="match status" value="1"/>
</dbReference>
<dbReference type="Pfam" id="PF03740">
    <property type="entry name" value="PdxJ"/>
    <property type="match status" value="1"/>
</dbReference>
<dbReference type="SUPFAM" id="SSF63892">
    <property type="entry name" value="Pyridoxine 5'-phosphate synthase"/>
    <property type="match status" value="1"/>
</dbReference>
<protein>
    <recommendedName>
        <fullName evidence="1">Pyridoxine 5'-phosphate synthase</fullName>
        <shortName evidence="1">PNP synthase</shortName>
        <ecNumber evidence="1">2.6.99.2</ecNumber>
    </recommendedName>
</protein>
<comment type="function">
    <text evidence="1">Catalyzes the complicated ring closure reaction between the two acyclic compounds 1-deoxy-D-xylulose-5-phosphate (DXP) and 3-amino-2-oxopropyl phosphate (1-amino-acetone-3-phosphate or AAP) to form pyridoxine 5'-phosphate (PNP) and inorganic phosphate.</text>
</comment>
<comment type="catalytic activity">
    <reaction evidence="1">
        <text>3-amino-2-oxopropyl phosphate + 1-deoxy-D-xylulose 5-phosphate = pyridoxine 5'-phosphate + phosphate + 2 H2O + H(+)</text>
        <dbReference type="Rhea" id="RHEA:15265"/>
        <dbReference type="ChEBI" id="CHEBI:15377"/>
        <dbReference type="ChEBI" id="CHEBI:15378"/>
        <dbReference type="ChEBI" id="CHEBI:43474"/>
        <dbReference type="ChEBI" id="CHEBI:57279"/>
        <dbReference type="ChEBI" id="CHEBI:57792"/>
        <dbReference type="ChEBI" id="CHEBI:58589"/>
        <dbReference type="EC" id="2.6.99.2"/>
    </reaction>
</comment>
<comment type="pathway">
    <text evidence="1">Cofactor biosynthesis; pyridoxine 5'-phosphate biosynthesis; pyridoxine 5'-phosphate from D-erythrose 4-phosphate: step 5/5.</text>
</comment>
<comment type="subunit">
    <text evidence="1">Homooctamer; tetramer of dimers.</text>
</comment>
<comment type="subcellular location">
    <subcellularLocation>
        <location evidence="1">Cytoplasm</location>
    </subcellularLocation>
</comment>
<comment type="similarity">
    <text evidence="1">Belongs to the PNP synthase family.</text>
</comment>
<feature type="chain" id="PRO_0000190142" description="Pyridoxine 5'-phosphate synthase">
    <location>
        <begin position="1"/>
        <end position="260"/>
    </location>
</feature>
<feature type="active site" description="Proton acceptor" evidence="1">
    <location>
        <position position="46"/>
    </location>
</feature>
<feature type="active site" description="Proton acceptor" evidence="1">
    <location>
        <position position="76"/>
    </location>
</feature>
<feature type="active site" description="Proton donor" evidence="1">
    <location>
        <position position="204"/>
    </location>
</feature>
<feature type="binding site" evidence="1">
    <location>
        <position position="10"/>
    </location>
    <ligand>
        <name>3-amino-2-oxopropyl phosphate</name>
        <dbReference type="ChEBI" id="CHEBI:57279"/>
    </ligand>
</feature>
<feature type="binding site" evidence="1">
    <location>
        <position position="21"/>
    </location>
    <ligand>
        <name>3-amino-2-oxopropyl phosphate</name>
        <dbReference type="ChEBI" id="CHEBI:57279"/>
    </ligand>
</feature>
<feature type="binding site" evidence="1">
    <location>
        <position position="48"/>
    </location>
    <ligand>
        <name>1-deoxy-D-xylulose 5-phosphate</name>
        <dbReference type="ChEBI" id="CHEBI:57792"/>
    </ligand>
</feature>
<feature type="binding site" evidence="1">
    <location>
        <position position="53"/>
    </location>
    <ligand>
        <name>1-deoxy-D-xylulose 5-phosphate</name>
        <dbReference type="ChEBI" id="CHEBI:57792"/>
    </ligand>
</feature>
<feature type="binding site" evidence="1">
    <location>
        <position position="113"/>
    </location>
    <ligand>
        <name>1-deoxy-D-xylulose 5-phosphate</name>
        <dbReference type="ChEBI" id="CHEBI:57792"/>
    </ligand>
</feature>
<feature type="binding site" evidence="1">
    <location>
        <position position="205"/>
    </location>
    <ligand>
        <name>3-amino-2-oxopropyl phosphate</name>
        <dbReference type="ChEBI" id="CHEBI:57279"/>
    </ligand>
</feature>
<feature type="binding site" evidence="1">
    <location>
        <begin position="227"/>
        <end position="228"/>
    </location>
    <ligand>
        <name>3-amino-2-oxopropyl phosphate</name>
        <dbReference type="ChEBI" id="CHEBI:57279"/>
    </ligand>
</feature>
<feature type="site" description="Transition state stabilizer" evidence="1">
    <location>
        <position position="164"/>
    </location>
</feature>
<name>PDXJ_XYLFA</name>
<sequence length="260" mass="28014">MSQRTRLSVNVNKIAVLRNSRGDGAPDVIRAASACIDAGAHGITVHPRPDARHIRHDDVIGLSALTRARGVEFNIEGNPFAEPRAGYCGLLALCRETRPHQVTLVPDGDQQITSDHGFDFAREGPGLRPLIDEIKQWGCRVSLFVDVNVTGLADAAIWGVDRIELYTGPYAEMHHAGCSDAVLREFATTARLAQDVGLGVNAGHDLSQTNLGVFLGAVPDVLEVSIGHALISEALYEGLVPTVRRYLDILDSVNPAVSMR</sequence>
<evidence type="ECO:0000255" key="1">
    <source>
        <dbReference type="HAMAP-Rule" id="MF_00279"/>
    </source>
</evidence>
<accession>Q9PH84</accession>
<organism>
    <name type="scientific">Xylella fastidiosa (strain 9a5c)</name>
    <dbReference type="NCBI Taxonomy" id="160492"/>
    <lineage>
        <taxon>Bacteria</taxon>
        <taxon>Pseudomonadati</taxon>
        <taxon>Pseudomonadota</taxon>
        <taxon>Gammaproteobacteria</taxon>
        <taxon>Lysobacterales</taxon>
        <taxon>Lysobacteraceae</taxon>
        <taxon>Xylella</taxon>
    </lineage>
</organism>